<keyword id="KW-0131">Cell cycle</keyword>
<keyword id="KW-0132">Cell division</keyword>
<keyword id="KW-0137">Centromere</keyword>
<keyword id="KW-0158">Chromosome</keyword>
<keyword id="KW-0963">Cytoplasm</keyword>
<keyword id="KW-0206">Cytoskeleton</keyword>
<keyword id="KW-0995">Kinetochore</keyword>
<keyword id="KW-0493">Microtubule</keyword>
<keyword id="KW-0498">Mitosis</keyword>
<keyword id="KW-1185">Reference proteome</keyword>
<keyword id="KW-0677">Repeat</keyword>
<comment type="function">
    <text evidence="2 4 5 6">Involved in regulation of microtubule dynamics. Regulates the interaction of microtubules tips with the centrosome and cell cortex.</text>
</comment>
<comment type="subunit">
    <text evidence="3 4 7">Interacts with eb1 at the microtubule tip, centrosome and kinetochore. Interacts with lis1 in the cortical attachment of microtubules.</text>
</comment>
<comment type="subcellular location">
    <subcellularLocation>
        <location>Cytoplasm</location>
        <location>Cytoskeleton</location>
        <location>Microtubule organizing center</location>
        <location>Centrosome</location>
    </subcellularLocation>
    <subcellularLocation>
        <location>Cytoplasm</location>
        <location>Cytoskeleton</location>
    </subcellularLocation>
    <subcellularLocation>
        <location>Chromosome</location>
        <location>Centromere</location>
        <location>Kinetochore</location>
    </subcellularLocation>
    <text>Associated with the microtubule network. Accumulates at the plus end of microtubules.</text>
</comment>
<comment type="developmental stage">
    <text evidence="2">Expressed throughout the cell cycle (at protein level).</text>
</comment>
<comment type="disruption phenotype">
    <text evidence="2">Mutants exhibit a disappearance of supernumerary centrosomes and multinuclear cells, and increased sensitivity to the microtubule depolymerizing drug nocodazole. Mutants overexpressing mtaA exhibit supernumerary centrosomes and a cytokinesis defect. Mutants underexpressing mtaA display inhibited growth and a reduction in the number and length of astral microtubes.</text>
</comment>
<comment type="similarity">
    <text evidence="8">Belongs to the TOG/XMAP215 family.</text>
</comment>
<reference key="1">
    <citation type="journal article" date="2000" name="J. Cell Sci.">
        <title>Dictyostelium DdCP224 is a microtubule-associated protein and a permanent centrosomal resident involved in centrosome duplication.</title>
        <authorList>
            <person name="Graef R."/>
            <person name="Daunderer C."/>
            <person name="Schliwa M."/>
        </authorList>
    </citation>
    <scope>NUCLEOTIDE SEQUENCE [MRNA]</scope>
    <scope>FUNCTION</scope>
    <scope>SUBCELLULAR LOCATION</scope>
    <scope>DEVELOPMENTAL STAGE</scope>
    <scope>DISRUPTION PHENOTYPE</scope>
    <source>
        <strain>AX2</strain>
    </source>
</reference>
<reference key="2">
    <citation type="journal article" date="2005" name="Nature">
        <title>The genome of the social amoeba Dictyostelium discoideum.</title>
        <authorList>
            <person name="Eichinger L."/>
            <person name="Pachebat J.A."/>
            <person name="Gloeckner G."/>
            <person name="Rajandream M.A."/>
            <person name="Sucgang R."/>
            <person name="Berriman M."/>
            <person name="Song J."/>
            <person name="Olsen R."/>
            <person name="Szafranski K."/>
            <person name="Xu Q."/>
            <person name="Tunggal B."/>
            <person name="Kummerfeld S."/>
            <person name="Madera M."/>
            <person name="Konfortov B.A."/>
            <person name="Rivero F."/>
            <person name="Bankier A.T."/>
            <person name="Lehmann R."/>
            <person name="Hamlin N."/>
            <person name="Davies R."/>
            <person name="Gaudet P."/>
            <person name="Fey P."/>
            <person name="Pilcher K."/>
            <person name="Chen G."/>
            <person name="Saunders D."/>
            <person name="Sodergren E.J."/>
            <person name="Davis P."/>
            <person name="Kerhornou A."/>
            <person name="Nie X."/>
            <person name="Hall N."/>
            <person name="Anjard C."/>
            <person name="Hemphill L."/>
            <person name="Bason N."/>
            <person name="Farbrother P."/>
            <person name="Desany B."/>
            <person name="Just E."/>
            <person name="Morio T."/>
            <person name="Rost R."/>
            <person name="Churcher C.M."/>
            <person name="Cooper J."/>
            <person name="Haydock S."/>
            <person name="van Driessche N."/>
            <person name="Cronin A."/>
            <person name="Goodhead I."/>
            <person name="Muzny D.M."/>
            <person name="Mourier T."/>
            <person name="Pain A."/>
            <person name="Lu M."/>
            <person name="Harper D."/>
            <person name="Lindsay R."/>
            <person name="Hauser H."/>
            <person name="James K.D."/>
            <person name="Quiles M."/>
            <person name="Madan Babu M."/>
            <person name="Saito T."/>
            <person name="Buchrieser C."/>
            <person name="Wardroper A."/>
            <person name="Felder M."/>
            <person name="Thangavelu M."/>
            <person name="Johnson D."/>
            <person name="Knights A."/>
            <person name="Loulseged H."/>
            <person name="Mungall K.L."/>
            <person name="Oliver K."/>
            <person name="Price C."/>
            <person name="Quail M.A."/>
            <person name="Urushihara H."/>
            <person name="Hernandez J."/>
            <person name="Rabbinowitsch E."/>
            <person name="Steffen D."/>
            <person name="Sanders M."/>
            <person name="Ma J."/>
            <person name="Kohara Y."/>
            <person name="Sharp S."/>
            <person name="Simmonds M.N."/>
            <person name="Spiegler S."/>
            <person name="Tivey A."/>
            <person name="Sugano S."/>
            <person name="White B."/>
            <person name="Walker D."/>
            <person name="Woodward J.R."/>
            <person name="Winckler T."/>
            <person name="Tanaka Y."/>
            <person name="Shaulsky G."/>
            <person name="Schleicher M."/>
            <person name="Weinstock G.M."/>
            <person name="Rosenthal A."/>
            <person name="Cox E.C."/>
            <person name="Chisholm R.L."/>
            <person name="Gibbs R.A."/>
            <person name="Loomis W.F."/>
            <person name="Platzer M."/>
            <person name="Kay R.R."/>
            <person name="Williams J.G."/>
            <person name="Dear P.H."/>
            <person name="Noegel A.A."/>
            <person name="Barrell B.G."/>
            <person name="Kuspa A."/>
        </authorList>
    </citation>
    <scope>NUCLEOTIDE SEQUENCE [LARGE SCALE GENOMIC DNA]</scope>
    <source>
        <strain>AX4</strain>
    </source>
</reference>
<reference key="3">
    <citation type="journal article" date="2002" name="J. Muscle Res. Cell Motil.">
        <title>Centrosomal microtubule plus end tracking proteins and their role in Dictyostelium cell dynamics.</title>
        <authorList>
            <person name="Hestermann A."/>
            <person name="Rehberg M."/>
            <person name="Graef R."/>
        </authorList>
    </citation>
    <scope>FUNCTION</scope>
    <scope>SUBUNIT</scope>
</reference>
<reference key="4">
    <citation type="journal article" date="2002" name="Mol. Biol. Cell">
        <title>Dictyostelium EB1 is a genuine centrosomal component required for proper spindle formation.</title>
        <authorList>
            <person name="Rehberg M."/>
            <person name="Graef R."/>
        </authorList>
    </citation>
    <scope>SUBUNIT</scope>
    <scope>SUBCELLULAR LOCATION</scope>
</reference>
<reference key="5">
    <citation type="journal article" date="2003" name="Mol. Biol. Cell">
        <title>Regulated expression of the centrosomal protein DdCP224 affects microtubule dynamics and reveals mechanisms for the control of supernumerary centrosome number.</title>
        <authorList>
            <person name="Graef R."/>
            <person name="Euteneuer U."/>
            <person name="Ho T.H."/>
            <person name="Rehberg M."/>
        </authorList>
    </citation>
    <scope>FUNCTION</scope>
</reference>
<reference key="6">
    <citation type="journal article" date="2004" name="BMC Cell Biol.">
        <title>The XMAP215-family protein DdCP224 is required for cortical interactions of microtubules.</title>
        <authorList>
            <person name="Hestermann A."/>
            <person name="Graef R."/>
        </authorList>
    </citation>
    <scope>FUNCTION</scope>
</reference>
<reference key="7">
    <citation type="journal article" date="2005" name="Mol. Biol. Cell">
        <title>Dictyostelium LIS1 is a centrosomal protein required for microtubule/cell cortex interactions, nucleus/centrosome linkage, and actin dynamics.</title>
        <authorList>
            <person name="Rehberg M."/>
            <person name="Kleylein-Sohn J."/>
            <person name="Faix J."/>
            <person name="Ho T.-H."/>
            <person name="Schulz I."/>
            <person name="Graef R."/>
        </authorList>
    </citation>
    <scope>SUBUNIT</scope>
</reference>
<reference key="8">
    <citation type="journal article" date="2006" name="Eur. J. Cell Biol.">
        <title>Identification and isolation of Dictyostelium microtubule-associated protein interactors by tandem affinity purification.</title>
        <authorList>
            <person name="Koch K.V."/>
            <person name="Reinders Y."/>
            <person name="Ho T.-H."/>
            <person name="Sickmann A."/>
            <person name="Graef R."/>
        </authorList>
    </citation>
    <scope>IDENTIFICATION BY MASS SPECTROMETRY [LARGE SCALE ANALYSIS]</scope>
    <source>
        <strain>AX2</strain>
    </source>
</reference>
<accession>Q1ZXQ8</accession>
<accession>Q9U5Y1</accession>
<name>MTAA_DICDI</name>
<sequence>MGDEEAPSGSIEDRINHKNWKWRVSGLEELTTKFRNSIEGSGPLFNEWGPQFKKILADINPMSQERALEPLSAFIDRCDCVNKFAASYVGVLVEKLFASTRPRAKEKTIECLLLTIEADSAEPVVEALLKGTSSTSPKILLASLAALTQALKTFGPKQIPVKLILKQFSPWFENRDKGIRDQASELFIEIYRWIGKALIPLISEALTPIQLKALQDQFEKLPTDPAVPLKYTRSEAAKALANASKGIQAKPEVVEEIDPYSLMTAVNILPKLTSEFYEGLQAKKWQERSEQMDKLVTILTNTPKIETADFSELCKALKKILADVNVMIVQKAVVSIGLLADSLRGGFTSYVKPFITPILEKFKEKKTSVLQSVHTTMDSLVGKSISLSDIIDELTATMQSKVPQIKQEVLVFICNSITNTKKPADITKVTKQLTKIFMEALNDTDSNIRDNASKAFAALGGIIGERAMTPYLNQIDPIKAKKIKDNMPAVATPVTITPQPLAPVDLKDIDLPVSSSNKKPAAATGNSKSSSTTTPTGRSSNSSPLPPPPSSSDDIKNKLIGAGIVNNEIIEGLGKTQWKDRLQAVDDILENVKGLTADSINGMSESIIQLLCDKPSLKESNFQVLSSIFSIFIQCCKNDSNFTQQRCANSYLTTCIEKLTDVKLKEISSELLFSTGESITPHAVFTSIYQFTSNHKNPKIIADSLVWIQQAIDEFGIGCCSNGIQQLKPLLDYTKQCLESTNPDVKKSAIKLLCTIKINIGATLTDFLGDVKKPTMEVLDREFQKIRDQKPPVPNRQWKGMPPPGSAPVQIEFPRVDISVKLTPAIITNLSDANWKTRSDALDEIERIIIDANRKIQPKLGGLIPALKNRLTDNNQKCTITTLNIIGMLSQAMGGQSFEKHARLLIPGILLLLGDSKKPVRDAVISCMNVIVQSDLGFDVFIGSLAAPMIQESAFTRKESLAWTIVNVTNMKAAPIPSEINTLAKGIISCLQDKSAEIRSLADNLLSILCTQIPLIEFKKELKHVKPASQPSIQTILDKYYQKTGQPIPPPSKTKQSTSSSSSSSSTTSQQSSTPSSPQPIRQQQQQQQQQPTQPQQQQQQQQRRSILQSNNGASNCEFIIFDINGKMNRQKTNQIPSWHFIEPTEEVVEILQDQVLQCFTEEFANLMFSSLPSNSQHMSDLMIGMIEQNPEAIISVLDILFRWITFKLFDTGLASQKRVLKILEILLNKLIDSEYSIGEYEASCLVPILLEKSGSATNEQIKQIFKQSIQQLEELCLPNVLFRFAIEMVTSQNWRTRVEVLNVMASIIDKNGASVCGNLKVVIPLITQNLNDSQSKQSSLLCLNKLYSHIKDECFKYSNISQQDKILIIGNNNNNNNNNNNNNNNNNNNNVQQQQQQQQQQQQQQPRKSLSTDEMSTQLIGCLELLKNYSITKENIEHTVEALKQFSGLMANGKLDDVFVNFAEEYFLVLTSILADTFPQVSKDATILRLCKYLIHTIISILSNKVVAKQCNVRCLEIVLNETIKLYSLAESNSSKQGTESELSKAFNQILLRILQNCNSTILFSTLLQMMSRTDNDQSIQHPGKYNDLLLRCLLRATKSLTTPSILEELNVETVLSEINSFLKSNPSLDEITRKTTKTLTSELYQNRTNQVVKFTKDIISKGQQQKYQYLLNLLIELVPKQFEDLINGNGNGNRISSGGSNNNNNNGGRVSSGGNNNNNSGRENINNININSSLDSPINDHHNSNNTTTTTTRSRTSTGSSNSQQQQLPTTSANTTTTTTTTTTTGKTQSTLSTLKINKEPRDYSGKTDSQKKELLIEIFKKIGNKDLTLDGIHDLYFFIREYPDYDITPNLNSSSQQFQAYITRNLKKIKDSMDAPKDKDDEVVNYQERLKVIQNTFYNQHNQPSSQVVNNNNNNNNNNNNNNNNNINNNNNNNNNSGGNENIAPQLSNTASMASNTLQRLRTLNPDQNSGSNNNNSHQNSPSTSSSNDLNSTVASLRQRLAQLTSKSNE</sequence>
<dbReference type="EMBL" id="AJ012088">
    <property type="protein sequence ID" value="CAB56504.1"/>
    <property type="molecule type" value="mRNA"/>
</dbReference>
<dbReference type="EMBL" id="AAFI02000004">
    <property type="protein sequence ID" value="EAS66944.1"/>
    <property type="molecule type" value="Genomic_DNA"/>
</dbReference>
<dbReference type="RefSeq" id="XP_001134481.1">
    <property type="nucleotide sequence ID" value="XM_001134481.1"/>
</dbReference>
<dbReference type="FunCoup" id="Q1ZXQ8">
    <property type="interactions" value="476"/>
</dbReference>
<dbReference type="STRING" id="44689.Q1ZXQ8"/>
<dbReference type="PaxDb" id="44689-DDB0232951"/>
<dbReference type="EnsemblProtists" id="EAS66944">
    <property type="protein sequence ID" value="EAS66944"/>
    <property type="gene ID" value="DDB_G0268616"/>
</dbReference>
<dbReference type="GeneID" id="8616510"/>
<dbReference type="KEGG" id="ddi:DDB_G0268616"/>
<dbReference type="dictyBase" id="DDB_G0268616">
    <property type="gene designation" value="cepJ"/>
</dbReference>
<dbReference type="VEuPathDB" id="AmoebaDB:DDB_G0268616"/>
<dbReference type="eggNOG" id="KOG1820">
    <property type="taxonomic scope" value="Eukaryota"/>
</dbReference>
<dbReference type="HOGENOM" id="CLU_000539_2_1_1"/>
<dbReference type="InParanoid" id="Q1ZXQ8"/>
<dbReference type="OMA" id="ERCAGQK"/>
<dbReference type="PhylomeDB" id="Q1ZXQ8"/>
<dbReference type="PRO" id="PR:Q1ZXQ8"/>
<dbReference type="Proteomes" id="UP000002195">
    <property type="component" value="Chromosome 1"/>
</dbReference>
<dbReference type="GO" id="GO:0005938">
    <property type="term" value="C:cell cortex"/>
    <property type="evidence" value="ECO:0000314"/>
    <property type="project" value="dictyBase"/>
</dbReference>
<dbReference type="GO" id="GO:0005813">
    <property type="term" value="C:centrosome"/>
    <property type="evidence" value="ECO:0000314"/>
    <property type="project" value="dictyBase"/>
</dbReference>
<dbReference type="GO" id="GO:0030139">
    <property type="term" value="C:endocytic vesicle"/>
    <property type="evidence" value="ECO:0000314"/>
    <property type="project" value="dictyBase"/>
</dbReference>
<dbReference type="GO" id="GO:0000776">
    <property type="term" value="C:kinetochore"/>
    <property type="evidence" value="ECO:0000314"/>
    <property type="project" value="dictyBase"/>
</dbReference>
<dbReference type="GO" id="GO:0005874">
    <property type="term" value="C:microtubule"/>
    <property type="evidence" value="ECO:0000314"/>
    <property type="project" value="dictyBase"/>
</dbReference>
<dbReference type="GO" id="GO:0000922">
    <property type="term" value="C:spindle pole"/>
    <property type="evidence" value="ECO:0000314"/>
    <property type="project" value="dictyBase"/>
</dbReference>
<dbReference type="GO" id="GO:0070840">
    <property type="term" value="F:dynein complex binding"/>
    <property type="evidence" value="ECO:0000314"/>
    <property type="project" value="dictyBase"/>
</dbReference>
<dbReference type="GO" id="GO:0008017">
    <property type="term" value="F:microtubule binding"/>
    <property type="evidence" value="ECO:0000314"/>
    <property type="project" value="dictyBase"/>
</dbReference>
<dbReference type="GO" id="GO:0061863">
    <property type="term" value="F:microtubule plus end polymerase"/>
    <property type="evidence" value="ECO:0000318"/>
    <property type="project" value="GO_Central"/>
</dbReference>
<dbReference type="GO" id="GO:0051010">
    <property type="term" value="F:microtubule plus-end binding"/>
    <property type="evidence" value="ECO:0007669"/>
    <property type="project" value="InterPro"/>
</dbReference>
<dbReference type="GO" id="GO:0051298">
    <property type="term" value="P:centrosome duplication"/>
    <property type="evidence" value="ECO:0000315"/>
    <property type="project" value="dictyBase"/>
</dbReference>
<dbReference type="GO" id="GO:0030951">
    <property type="term" value="P:establishment or maintenance of microtubule cytoskeleton polarity"/>
    <property type="evidence" value="ECO:0000318"/>
    <property type="project" value="GO_Central"/>
</dbReference>
<dbReference type="GO" id="GO:0007030">
    <property type="term" value="P:Golgi organization"/>
    <property type="evidence" value="ECO:0000315"/>
    <property type="project" value="dictyBase"/>
</dbReference>
<dbReference type="GO" id="GO:0000226">
    <property type="term" value="P:microtubule cytoskeleton organization"/>
    <property type="evidence" value="ECO:0000315"/>
    <property type="project" value="dictyBase"/>
</dbReference>
<dbReference type="GO" id="GO:0046785">
    <property type="term" value="P:microtubule polymerization"/>
    <property type="evidence" value="ECO:0000315"/>
    <property type="project" value="dictyBase"/>
</dbReference>
<dbReference type="GO" id="GO:0000281">
    <property type="term" value="P:mitotic cytokinesis"/>
    <property type="evidence" value="ECO:0000315"/>
    <property type="project" value="dictyBase"/>
</dbReference>
<dbReference type="GO" id="GO:0007052">
    <property type="term" value="P:mitotic spindle organization"/>
    <property type="evidence" value="ECO:0000318"/>
    <property type="project" value="GO_Central"/>
</dbReference>
<dbReference type="FunFam" id="1.25.10.10:FF:000608">
    <property type="entry name" value="Centrosomal protein 224"/>
    <property type="match status" value="2"/>
</dbReference>
<dbReference type="FunFam" id="1.25.10.10:FF:000019">
    <property type="entry name" value="Cytoskeleton-associated protein 5"/>
    <property type="match status" value="2"/>
</dbReference>
<dbReference type="FunFam" id="1.25.10.10:FF:000050">
    <property type="entry name" value="Cytoskeleton-associated protein 5 isoform X1"/>
    <property type="match status" value="1"/>
</dbReference>
<dbReference type="Gene3D" id="1.25.10.10">
    <property type="entry name" value="Leucine-rich Repeat Variant"/>
    <property type="match status" value="5"/>
</dbReference>
<dbReference type="InterPro" id="IPR011989">
    <property type="entry name" value="ARM-like"/>
</dbReference>
<dbReference type="InterPro" id="IPR016024">
    <property type="entry name" value="ARM-type_fold"/>
</dbReference>
<dbReference type="InterPro" id="IPR021133">
    <property type="entry name" value="HEAT_type_2"/>
</dbReference>
<dbReference type="InterPro" id="IPR034085">
    <property type="entry name" value="TOG"/>
</dbReference>
<dbReference type="InterPro" id="IPR045110">
    <property type="entry name" value="XMAP215"/>
</dbReference>
<dbReference type="InterPro" id="IPR048491">
    <property type="entry name" value="XMAP215_CLASP_TOG"/>
</dbReference>
<dbReference type="PANTHER" id="PTHR12609">
    <property type="entry name" value="MICROTUBULE ASSOCIATED PROTEIN XMAP215"/>
    <property type="match status" value="1"/>
</dbReference>
<dbReference type="Pfam" id="PF21040">
    <property type="entry name" value="CEP104-like_TOG"/>
    <property type="match status" value="1"/>
</dbReference>
<dbReference type="Pfam" id="PF21041">
    <property type="entry name" value="XMAP215_CLASP_TOG"/>
    <property type="match status" value="3"/>
</dbReference>
<dbReference type="SMART" id="SM01349">
    <property type="entry name" value="TOG"/>
    <property type="match status" value="5"/>
</dbReference>
<dbReference type="SUPFAM" id="SSF48371">
    <property type="entry name" value="ARM repeat"/>
    <property type="match status" value="2"/>
</dbReference>
<dbReference type="PROSITE" id="PS50077">
    <property type="entry name" value="HEAT_REPEAT"/>
    <property type="match status" value="1"/>
</dbReference>
<evidence type="ECO:0000256" key="1">
    <source>
        <dbReference type="SAM" id="MobiDB-lite"/>
    </source>
</evidence>
<evidence type="ECO:0000269" key="2">
    <source>
    </source>
</evidence>
<evidence type="ECO:0000269" key="3">
    <source>
    </source>
</evidence>
<evidence type="ECO:0000269" key="4">
    <source>
    </source>
</evidence>
<evidence type="ECO:0000269" key="5">
    <source>
    </source>
</evidence>
<evidence type="ECO:0000269" key="6">
    <source>
    </source>
</evidence>
<evidence type="ECO:0000269" key="7">
    <source>
    </source>
</evidence>
<evidence type="ECO:0000305" key="8"/>
<proteinExistence type="evidence at protein level"/>
<organism>
    <name type="scientific">Dictyostelium discoideum</name>
    <name type="common">Social amoeba</name>
    <dbReference type="NCBI Taxonomy" id="44689"/>
    <lineage>
        <taxon>Eukaryota</taxon>
        <taxon>Amoebozoa</taxon>
        <taxon>Evosea</taxon>
        <taxon>Eumycetozoa</taxon>
        <taxon>Dictyostelia</taxon>
        <taxon>Dictyosteliales</taxon>
        <taxon>Dictyosteliaceae</taxon>
        <taxon>Dictyostelium</taxon>
    </lineage>
</organism>
<feature type="chain" id="PRO_0000328618" description="Centrosomal protein 224">
    <location>
        <begin position="1"/>
        <end position="2013"/>
    </location>
</feature>
<feature type="repeat" description="HEAT 1">
    <location>
        <begin position="115"/>
        <end position="153"/>
    </location>
</feature>
<feature type="repeat" description="HEAT 2">
    <location>
        <begin position="158"/>
        <end position="196"/>
    </location>
</feature>
<feature type="repeat" description="HEAT 3">
    <location>
        <begin position="200"/>
        <end position="238"/>
    </location>
</feature>
<feature type="repeat" description="HEAT 4">
    <location>
        <begin position="348"/>
        <end position="386"/>
    </location>
</feature>
<feature type="repeat" description="HEAT 5">
    <location>
        <begin position="427"/>
        <end position="465"/>
    </location>
</feature>
<feature type="repeat" description="HEAT 6">
    <location>
        <begin position="724"/>
        <end position="762"/>
    </location>
</feature>
<feature type="repeat" description="HEAT 7">
    <location>
        <begin position="816"/>
        <end position="854"/>
    </location>
</feature>
<feature type="repeat" description="HEAT 8">
    <location>
        <begin position="857"/>
        <end position="895"/>
    </location>
</feature>
<feature type="repeat" description="HEAT 9">
    <location>
        <begin position="899"/>
        <end position="937"/>
    </location>
</feature>
<feature type="repeat" description="HEAT 10">
    <location>
        <begin position="977"/>
        <end position="1015"/>
    </location>
</feature>
<feature type="repeat" description="HEAT 11">
    <location>
        <begin position="1240"/>
        <end position="1279"/>
    </location>
</feature>
<feature type="repeat" description="HEAT 12">
    <location>
        <begin position="1281"/>
        <end position="1314"/>
    </location>
</feature>
<feature type="repeat" description="HEAT 13">
    <location>
        <begin position="1317"/>
        <end position="1353"/>
    </location>
</feature>
<feature type="region of interest" description="Disordered" evidence="1">
    <location>
        <begin position="512"/>
        <end position="557"/>
    </location>
</feature>
<feature type="region of interest" description="Disordered" evidence="1">
    <location>
        <begin position="1043"/>
        <end position="1109"/>
    </location>
</feature>
<feature type="region of interest" description="Disordered" evidence="1">
    <location>
        <begin position="1372"/>
        <end position="1413"/>
    </location>
</feature>
<feature type="region of interest" description="Disordered" evidence="1">
    <location>
        <begin position="1695"/>
        <end position="1809"/>
    </location>
</feature>
<feature type="region of interest" description="Disordered" evidence="1">
    <location>
        <begin position="1905"/>
        <end position="1949"/>
    </location>
</feature>
<feature type="region of interest" description="Disordered" evidence="1">
    <location>
        <begin position="1966"/>
        <end position="1995"/>
    </location>
</feature>
<feature type="compositionally biased region" description="Low complexity" evidence="1">
    <location>
        <begin position="524"/>
        <end position="543"/>
    </location>
</feature>
<feature type="compositionally biased region" description="Low complexity" evidence="1">
    <location>
        <begin position="1053"/>
        <end position="1106"/>
    </location>
</feature>
<feature type="compositionally biased region" description="Low complexity" evidence="1">
    <location>
        <begin position="1372"/>
        <end position="1406"/>
    </location>
</feature>
<feature type="compositionally biased region" description="Low complexity" evidence="1">
    <location>
        <begin position="1695"/>
        <end position="1735"/>
    </location>
</feature>
<feature type="compositionally biased region" description="Low complexity" evidence="1">
    <location>
        <begin position="1746"/>
        <end position="1796"/>
    </location>
</feature>
<feature type="compositionally biased region" description="Basic and acidic residues" evidence="1">
    <location>
        <begin position="1799"/>
        <end position="1809"/>
    </location>
</feature>
<feature type="compositionally biased region" description="Low complexity" evidence="1">
    <location>
        <begin position="1913"/>
        <end position="1939"/>
    </location>
</feature>
<feature type="compositionally biased region" description="Polar residues" evidence="1">
    <location>
        <begin position="1940"/>
        <end position="1949"/>
    </location>
</feature>
<feature type="compositionally biased region" description="Low complexity" evidence="1">
    <location>
        <begin position="1967"/>
        <end position="1995"/>
    </location>
</feature>
<feature type="sequence conflict" description="In Ref. 1; CAB56504." evidence="8" ref="1">
    <original>N</original>
    <variation>NN</variation>
    <location>
        <position position="1391"/>
    </location>
</feature>
<feature type="sequence conflict" description="In Ref. 1; CAB56504." evidence="8" ref="1">
    <original>N</original>
    <variation>NN</variation>
    <location>
        <position position="1929"/>
    </location>
</feature>
<protein>
    <recommendedName>
        <fullName>Centrosomal protein 224</fullName>
        <shortName>CP224</shortName>
    </recommendedName>
</protein>
<gene>
    <name type="primary">mtaA</name>
    <name type="ORF">DDB_G0268616</name>
</gene>